<comment type="function">
    <text>Nitrate reductase is a key enzyme involved in the first step of nitrate assimilation in plants, fungi and bacteria.</text>
</comment>
<comment type="catalytic activity">
    <reaction>
        <text>nitrite + NADP(+) + H2O = nitrate + NADPH + H(+)</text>
        <dbReference type="Rhea" id="RHEA:19061"/>
        <dbReference type="ChEBI" id="CHEBI:15377"/>
        <dbReference type="ChEBI" id="CHEBI:15378"/>
        <dbReference type="ChEBI" id="CHEBI:16301"/>
        <dbReference type="ChEBI" id="CHEBI:17632"/>
        <dbReference type="ChEBI" id="CHEBI:57783"/>
        <dbReference type="ChEBI" id="CHEBI:58349"/>
        <dbReference type="EC" id="1.7.1.3"/>
    </reaction>
</comment>
<comment type="cofactor">
    <cofactor evidence="1">
        <name>FAD</name>
        <dbReference type="ChEBI" id="CHEBI:57692"/>
    </cofactor>
    <text evidence="1">Binds 1 FAD.</text>
</comment>
<comment type="cofactor">
    <cofactor evidence="1">
        <name>heme</name>
        <dbReference type="ChEBI" id="CHEBI:30413"/>
    </cofactor>
    <text evidence="1">Binds 1 heme group. The heme group is called cytochrome b-557.</text>
</comment>
<comment type="cofactor">
    <cofactor evidence="1">
        <name>Mo-molybdopterin</name>
        <dbReference type="ChEBI" id="CHEBI:71302"/>
    </cofactor>
    <text evidence="1">Binds 1 Mo-molybdopterin (Mo-MPT) cofactor per subunit.</text>
</comment>
<comment type="subunit">
    <text evidence="1">Homodimer.</text>
</comment>
<comment type="similarity">
    <text evidence="8">Belongs to the nitrate reductase family.</text>
</comment>
<reference key="1">
    <citation type="journal article" date="1995" name="Curr. Genet.">
        <title>NiaA, the structural nitrate reductase gene of Phytophthora infestans: isolation, characterization and expression analysis in Aspergillus nidulans.</title>
        <authorList>
            <person name="Pieterse C.M.J."/>
            <person name="van 't Klooster J."/>
            <person name="van den Berg-Velthuis G.C.M."/>
            <person name="Govers F."/>
        </authorList>
    </citation>
    <scope>NUCLEOTIDE SEQUENCE [GENOMIC DNA]</scope>
    <source>
        <strain>Isolate 88069</strain>
    </source>
</reference>
<accession>P39864</accession>
<feature type="chain" id="PRO_0000166047" description="Nitrate reductase [NADPH]">
    <location>
        <begin position="1"/>
        <end position="902"/>
    </location>
</feature>
<feature type="domain" description="Cytochrome b5 heme-binding" evidence="6">
    <location>
        <begin position="537"/>
        <end position="612"/>
    </location>
</feature>
<feature type="domain" description="FAD-binding FR-type" evidence="7">
    <location>
        <begin position="637"/>
        <end position="751"/>
    </location>
</feature>
<feature type="binding site" evidence="4">
    <location>
        <position position="182"/>
    </location>
    <ligand>
        <name>Mo-molybdopterin</name>
        <dbReference type="ChEBI" id="CHEBI:71302"/>
    </ligand>
    <ligandPart>
        <name>Mo</name>
        <dbReference type="ChEBI" id="CHEBI:28685"/>
    </ligandPart>
</feature>
<feature type="binding site" description="axial binding residue" evidence="6">
    <location>
        <position position="572"/>
    </location>
    <ligand>
        <name>heme</name>
        <dbReference type="ChEBI" id="CHEBI:30413"/>
    </ligand>
    <ligandPart>
        <name>Fe</name>
        <dbReference type="ChEBI" id="CHEBI:18248"/>
    </ligandPart>
</feature>
<feature type="binding site" description="axial binding residue" evidence="6">
    <location>
        <position position="595"/>
    </location>
    <ligand>
        <name>heme</name>
        <dbReference type="ChEBI" id="CHEBI:30413"/>
    </ligand>
    <ligandPart>
        <name>Fe</name>
        <dbReference type="ChEBI" id="CHEBI:18248"/>
    </ligandPart>
</feature>
<feature type="binding site" evidence="2">
    <location>
        <begin position="689"/>
        <end position="692"/>
    </location>
    <ligand>
        <name>FAD</name>
        <dbReference type="ChEBI" id="CHEBI:57692"/>
    </ligand>
</feature>
<feature type="binding site" evidence="2">
    <location>
        <begin position="708"/>
        <end position="712"/>
    </location>
    <ligand>
        <name>FAD</name>
        <dbReference type="ChEBI" id="CHEBI:57692"/>
    </ligand>
</feature>
<feature type="binding site" evidence="3">
    <location>
        <position position="713"/>
    </location>
    <ligand>
        <name>FAD</name>
        <dbReference type="ChEBI" id="CHEBI:57692"/>
    </ligand>
</feature>
<feature type="binding site" evidence="2">
    <location>
        <begin position="725"/>
        <end position="727"/>
    </location>
    <ligand>
        <name>FAD</name>
        <dbReference type="ChEBI" id="CHEBI:57692"/>
    </ligand>
</feature>
<feature type="binding site" evidence="2">
    <location>
        <position position="778"/>
    </location>
    <ligand>
        <name>FAD</name>
        <dbReference type="ChEBI" id="CHEBI:57692"/>
    </ligand>
</feature>
<feature type="binding site" evidence="1">
    <location>
        <begin position="872"/>
        <end position="879"/>
    </location>
    <ligand>
        <name>NADP(+)</name>
        <dbReference type="ChEBI" id="CHEBI:58349"/>
    </ligand>
</feature>
<feature type="disulfide bond" description="Interchain" evidence="5">
    <location>
        <position position="419"/>
    </location>
</feature>
<proteinExistence type="inferred from homology"/>
<sequence length="902" mass="101074">MTRLRSAASTITNRSTPALALTASHAGSHPAVIVPIQPLLLTLERRPSCPHRVSYPEIEAYRGISSSLRSHNAIVRASDIMAQIDPRDVGTPDEWVPRHPELIRLTGRHPFNSEPPLKYASTFITPMALHYVRNHGPVPRLEWDTHTFSIDGLVKKPRTFGMNELVTTFEQETVTFPVLLVCAGNRRKEQNMIKKTIGFSWGAAGCSTAEWTGVPLHVLLTACGVDREKAQWVWFEGIEDLPHDKYGTCIRASTELDPECDVLVAWKANGELLGPDHGFPVRLIVPGHIGGRMVKWLERIHVSDHESSNHHHIMDNRVLPSHVTAETATAEGWWSKSPYAIMELNVNAVVILPNHDDLLALGEDTTFNDIETYTIKGYAYSGGGRRVIRVEVTLDDGASWQLARIIYHERPSKYGKMWCWVHYELAAPMSSLLCAREVCVRAWDSSMNLMPAFPTWNVMGMMNNPWYRVKIHHEQDTNSLRFEHPTQAGNQKGGWMTKERIMTNDVDSIKMLQVEPLDTSSAATPKPGLTADELSELPLIFADEVAKHNSKKSCWFICRDLVYDATPFLDEHPGGATSILLCGGTDCTDEFESIHSTKAWQMLKKYCIGRCSSTEDDTGTSDTSSDHEETDVALKGRTKVPIVLISREVVSHDARIFKFALPAKDLRLGLPIGNHVFLYAKINGKTAVRAYTPISSENDEDRGFVSFLIKVYFAGDNPVHPEGGLFSQYLDGLHLGQQIQIKGPLGHFTYYGDGNFSLETTNFHAYKFGFVAGGTGITPVYQVMRAILEDAKDQTKVALIYCVRSQRDLLLRKELETLQKLRPGQCRIFYTLSDMELLDRNDPIVRGWAYGKSRLNFAMVKNIIGSDAEDVCMCGPEGMIEYACKPALLKLNYDLKTQTTVF</sequence>
<protein>
    <recommendedName>
        <fullName>Nitrate reductase [NADPH]</fullName>
        <shortName>NR</shortName>
        <ecNumber>1.7.1.3</ecNumber>
    </recommendedName>
</protein>
<organism>
    <name type="scientific">Phytophthora infestans</name>
    <name type="common">Potato late blight agent</name>
    <name type="synonym">Botrytis infestans</name>
    <dbReference type="NCBI Taxonomy" id="4787"/>
    <lineage>
        <taxon>Eukaryota</taxon>
        <taxon>Sar</taxon>
        <taxon>Stramenopiles</taxon>
        <taxon>Oomycota</taxon>
        <taxon>Peronosporales</taxon>
        <taxon>Peronosporaceae</taxon>
        <taxon>Phytophthora</taxon>
    </lineage>
</organism>
<name>NIA_PHYIN</name>
<keyword id="KW-1015">Disulfide bond</keyword>
<keyword id="KW-0274">FAD</keyword>
<keyword id="KW-0285">Flavoprotein</keyword>
<keyword id="KW-0349">Heme</keyword>
<keyword id="KW-0408">Iron</keyword>
<keyword id="KW-0479">Metal-binding</keyword>
<keyword id="KW-0500">Molybdenum</keyword>
<keyword id="KW-0521">NADP</keyword>
<keyword id="KW-0534">Nitrate assimilation</keyword>
<keyword id="KW-0560">Oxidoreductase</keyword>
<gene>
    <name type="primary">NIAA</name>
</gene>
<evidence type="ECO:0000250" key="1"/>
<evidence type="ECO:0000250" key="2">
    <source>
        <dbReference type="UniProtKB" id="A0A286R227"/>
    </source>
</evidence>
<evidence type="ECO:0000250" key="3">
    <source>
        <dbReference type="UniProtKB" id="P17571"/>
    </source>
</evidence>
<evidence type="ECO:0000250" key="4">
    <source>
        <dbReference type="UniProtKB" id="P49050"/>
    </source>
</evidence>
<evidence type="ECO:0000255" key="5"/>
<evidence type="ECO:0000255" key="6">
    <source>
        <dbReference type="PROSITE-ProRule" id="PRU00279"/>
    </source>
</evidence>
<evidence type="ECO:0000255" key="7">
    <source>
        <dbReference type="PROSITE-ProRule" id="PRU00716"/>
    </source>
</evidence>
<evidence type="ECO:0000305" key="8"/>
<dbReference type="EC" id="1.7.1.3"/>
<dbReference type="EMBL" id="U14405">
    <property type="protein sequence ID" value="AAA86681.1"/>
    <property type="molecule type" value="Genomic_DNA"/>
</dbReference>
<dbReference type="PIR" id="S57199">
    <property type="entry name" value="S57199"/>
</dbReference>
<dbReference type="SMR" id="P39864"/>
<dbReference type="VEuPathDB" id="FungiDB:PITG_13012"/>
<dbReference type="GO" id="GO:0071949">
    <property type="term" value="F:FAD binding"/>
    <property type="evidence" value="ECO:0000250"/>
    <property type="project" value="UniProtKB"/>
</dbReference>
<dbReference type="GO" id="GO:0020037">
    <property type="term" value="F:heme binding"/>
    <property type="evidence" value="ECO:0007669"/>
    <property type="project" value="InterPro"/>
</dbReference>
<dbReference type="GO" id="GO:0030151">
    <property type="term" value="F:molybdenum ion binding"/>
    <property type="evidence" value="ECO:0000250"/>
    <property type="project" value="UniProtKB"/>
</dbReference>
<dbReference type="GO" id="GO:0043546">
    <property type="term" value="F:molybdopterin cofactor binding"/>
    <property type="evidence" value="ECO:0007669"/>
    <property type="project" value="TreeGrafter"/>
</dbReference>
<dbReference type="GO" id="GO:0050464">
    <property type="term" value="F:nitrate reductase (NADPH) activity"/>
    <property type="evidence" value="ECO:0007669"/>
    <property type="project" value="UniProtKB-EC"/>
</dbReference>
<dbReference type="GO" id="GO:0008482">
    <property type="term" value="F:sulfite oxidase activity"/>
    <property type="evidence" value="ECO:0007669"/>
    <property type="project" value="TreeGrafter"/>
</dbReference>
<dbReference type="GO" id="GO:0042128">
    <property type="term" value="P:nitrate assimilation"/>
    <property type="evidence" value="ECO:0007669"/>
    <property type="project" value="UniProtKB-KW"/>
</dbReference>
<dbReference type="GO" id="GO:0006809">
    <property type="term" value="P:nitric oxide biosynthetic process"/>
    <property type="evidence" value="ECO:0007669"/>
    <property type="project" value="InterPro"/>
</dbReference>
<dbReference type="GO" id="GO:0006790">
    <property type="term" value="P:sulfur compound metabolic process"/>
    <property type="evidence" value="ECO:0007669"/>
    <property type="project" value="TreeGrafter"/>
</dbReference>
<dbReference type="CDD" id="cd06183">
    <property type="entry name" value="cyt_b5_reduct_like"/>
    <property type="match status" value="1"/>
</dbReference>
<dbReference type="CDD" id="cd02112">
    <property type="entry name" value="eukary_NR_Moco"/>
    <property type="match status" value="1"/>
</dbReference>
<dbReference type="FunFam" id="2.40.30.10:FF:000021">
    <property type="entry name" value="NADH-cytochrome b5 reductase"/>
    <property type="match status" value="1"/>
</dbReference>
<dbReference type="FunFam" id="2.60.40.650:FF:000001">
    <property type="entry name" value="Nitrate reductase"/>
    <property type="match status" value="1"/>
</dbReference>
<dbReference type="FunFam" id="3.90.420.10:FF:000005">
    <property type="entry name" value="Nitrate reductase"/>
    <property type="match status" value="1"/>
</dbReference>
<dbReference type="FunFam" id="3.10.120.10:FF:000007">
    <property type="entry name" value="Sulfite oxidase, mitochondrial"/>
    <property type="match status" value="1"/>
</dbReference>
<dbReference type="Gene3D" id="2.60.40.650">
    <property type="match status" value="1"/>
</dbReference>
<dbReference type="Gene3D" id="3.10.120.10">
    <property type="entry name" value="Cytochrome b5-like heme/steroid binding domain"/>
    <property type="match status" value="1"/>
</dbReference>
<dbReference type="Gene3D" id="3.40.50.80">
    <property type="entry name" value="Nucleotide-binding domain of ferredoxin-NADP reductase (FNR) module"/>
    <property type="match status" value="1"/>
</dbReference>
<dbReference type="Gene3D" id="3.90.420.10">
    <property type="entry name" value="Oxidoreductase, molybdopterin-binding domain"/>
    <property type="match status" value="1"/>
</dbReference>
<dbReference type="Gene3D" id="2.40.30.10">
    <property type="entry name" value="Translation factors"/>
    <property type="match status" value="1"/>
</dbReference>
<dbReference type="InterPro" id="IPR008333">
    <property type="entry name" value="Cbr1-like_FAD-bd_dom"/>
</dbReference>
<dbReference type="InterPro" id="IPR001199">
    <property type="entry name" value="Cyt_B5-like_heme/steroid-bd"/>
</dbReference>
<dbReference type="InterPro" id="IPR036400">
    <property type="entry name" value="Cyt_B5-like_heme/steroid_sf"/>
</dbReference>
<dbReference type="InterPro" id="IPR018506">
    <property type="entry name" value="Cyt_B5_heme-BS"/>
</dbReference>
<dbReference type="InterPro" id="IPR017927">
    <property type="entry name" value="FAD-bd_FR_type"/>
</dbReference>
<dbReference type="InterPro" id="IPR001709">
    <property type="entry name" value="Flavoprot_Pyr_Nucl_cyt_Rdtase"/>
</dbReference>
<dbReference type="InterPro" id="IPR039261">
    <property type="entry name" value="FNR_nucleotide-bd"/>
</dbReference>
<dbReference type="InterPro" id="IPR014756">
    <property type="entry name" value="Ig_E-set"/>
</dbReference>
<dbReference type="InterPro" id="IPR005066">
    <property type="entry name" value="MoCF_OxRdtse_dimer"/>
</dbReference>
<dbReference type="InterPro" id="IPR008335">
    <property type="entry name" value="Mopterin_OxRdtase_euk"/>
</dbReference>
<dbReference type="InterPro" id="IPR012137">
    <property type="entry name" value="Nitr_rd_NADH"/>
</dbReference>
<dbReference type="InterPro" id="IPR001433">
    <property type="entry name" value="OxRdtase_FAD/NAD-bd"/>
</dbReference>
<dbReference type="InterPro" id="IPR000572">
    <property type="entry name" value="OxRdtase_Mopterin-bd_dom"/>
</dbReference>
<dbReference type="InterPro" id="IPR036374">
    <property type="entry name" value="OxRdtase_Mopterin-bd_sf"/>
</dbReference>
<dbReference type="InterPro" id="IPR017938">
    <property type="entry name" value="Riboflavin_synthase-like_b-brl"/>
</dbReference>
<dbReference type="PANTHER" id="PTHR19372:SF7">
    <property type="entry name" value="SULFITE OXIDASE, MITOCHONDRIAL"/>
    <property type="match status" value="1"/>
</dbReference>
<dbReference type="PANTHER" id="PTHR19372">
    <property type="entry name" value="SULFITE REDUCTASE"/>
    <property type="match status" value="1"/>
</dbReference>
<dbReference type="Pfam" id="PF00173">
    <property type="entry name" value="Cyt-b5"/>
    <property type="match status" value="1"/>
</dbReference>
<dbReference type="Pfam" id="PF00970">
    <property type="entry name" value="FAD_binding_6"/>
    <property type="match status" value="1"/>
</dbReference>
<dbReference type="Pfam" id="PF03404">
    <property type="entry name" value="Mo-co_dimer"/>
    <property type="match status" value="1"/>
</dbReference>
<dbReference type="Pfam" id="PF00175">
    <property type="entry name" value="NAD_binding_1"/>
    <property type="match status" value="1"/>
</dbReference>
<dbReference type="Pfam" id="PF00174">
    <property type="entry name" value="Oxidored_molyb"/>
    <property type="match status" value="1"/>
</dbReference>
<dbReference type="PIRSF" id="PIRSF000233">
    <property type="entry name" value="Nitr_rd_NADH"/>
    <property type="match status" value="1"/>
</dbReference>
<dbReference type="PRINTS" id="PR00406">
    <property type="entry name" value="CYTB5RDTASE"/>
</dbReference>
<dbReference type="PRINTS" id="PR00363">
    <property type="entry name" value="CYTOCHROMEB5"/>
</dbReference>
<dbReference type="PRINTS" id="PR00407">
    <property type="entry name" value="EUMOPTERIN"/>
</dbReference>
<dbReference type="PRINTS" id="PR00371">
    <property type="entry name" value="FPNCR"/>
</dbReference>
<dbReference type="SMART" id="SM01117">
    <property type="entry name" value="Cyt-b5"/>
    <property type="match status" value="1"/>
</dbReference>
<dbReference type="SUPFAM" id="SSF55856">
    <property type="entry name" value="Cytochrome b5-like heme/steroid binding domain"/>
    <property type="match status" value="1"/>
</dbReference>
<dbReference type="SUPFAM" id="SSF81296">
    <property type="entry name" value="E set domains"/>
    <property type="match status" value="1"/>
</dbReference>
<dbReference type="SUPFAM" id="SSF52343">
    <property type="entry name" value="Ferredoxin reductase-like, C-terminal NADP-linked domain"/>
    <property type="match status" value="1"/>
</dbReference>
<dbReference type="SUPFAM" id="SSF56524">
    <property type="entry name" value="Oxidoreductase molybdopterin-binding domain"/>
    <property type="match status" value="1"/>
</dbReference>
<dbReference type="SUPFAM" id="SSF63380">
    <property type="entry name" value="Riboflavin synthase domain-like"/>
    <property type="match status" value="1"/>
</dbReference>
<dbReference type="PROSITE" id="PS00191">
    <property type="entry name" value="CYTOCHROME_B5_1"/>
    <property type="match status" value="1"/>
</dbReference>
<dbReference type="PROSITE" id="PS50255">
    <property type="entry name" value="CYTOCHROME_B5_2"/>
    <property type="match status" value="1"/>
</dbReference>
<dbReference type="PROSITE" id="PS51384">
    <property type="entry name" value="FAD_FR"/>
    <property type="match status" value="1"/>
</dbReference>